<reference key="1">
    <citation type="journal article" date="2002" name="DNA Cell Biol.">
        <title>An oxysterol-binding protein family identified in the mouse.</title>
        <authorList>
            <person name="Anniss A.M."/>
            <person name="Apostolopoulos J."/>
            <person name="Dworkin S."/>
            <person name="Purton L.E."/>
            <person name="Sparrow R.L."/>
        </authorList>
    </citation>
    <scope>NUCLEOTIDE SEQUENCE [MRNA] (ISOFORM 2)</scope>
    <scope>TISSUE SPECIFICITY</scope>
    <source>
        <strain>BALB/cJ</strain>
        <tissue>Brain</tissue>
    </source>
</reference>
<reference key="2">
    <citation type="journal article" date="2004" name="DNA Res.">
        <title>An evolutionary scenario for genomic imprinting of Impact lying between nonimprinted neighbors.</title>
        <authorList>
            <person name="Okamura K."/>
            <person name="Yamada Y."/>
            <person name="Sakaki Y."/>
            <person name="Ito T."/>
        </authorList>
    </citation>
    <scope>NUCLEOTIDE SEQUENCE [MRNA] (ISOFORM 1)</scope>
    <source>
        <strain>C57BL/6J</strain>
        <tissue>Brain</tissue>
    </source>
</reference>
<reference key="3">
    <citation type="submission" date="1998-08" db="EMBL/GenBank/DDBJ databases">
        <title>Mouse putative oxysterol-binding protein mRNA, complete cds.</title>
        <authorList>
            <person name="Snider J."/>
            <person name="Sano H."/>
            <person name="Ohta M."/>
        </authorList>
    </citation>
    <scope>NUCLEOTIDE SEQUENCE [MRNA] (ISOFORM 3)</scope>
    <source>
        <tissue>Brain</tissue>
    </source>
</reference>
<reference key="4">
    <citation type="journal article" date="2005" name="Science">
        <title>The transcriptional landscape of the mammalian genome.</title>
        <authorList>
            <person name="Carninci P."/>
            <person name="Kasukawa T."/>
            <person name="Katayama S."/>
            <person name="Gough J."/>
            <person name="Frith M.C."/>
            <person name="Maeda N."/>
            <person name="Oyama R."/>
            <person name="Ravasi T."/>
            <person name="Lenhard B."/>
            <person name="Wells C."/>
            <person name="Kodzius R."/>
            <person name="Shimokawa K."/>
            <person name="Bajic V.B."/>
            <person name="Brenner S.E."/>
            <person name="Batalov S."/>
            <person name="Forrest A.R."/>
            <person name="Zavolan M."/>
            <person name="Davis M.J."/>
            <person name="Wilming L.G."/>
            <person name="Aidinis V."/>
            <person name="Allen J.E."/>
            <person name="Ambesi-Impiombato A."/>
            <person name="Apweiler R."/>
            <person name="Aturaliya R.N."/>
            <person name="Bailey T.L."/>
            <person name="Bansal M."/>
            <person name="Baxter L."/>
            <person name="Beisel K.W."/>
            <person name="Bersano T."/>
            <person name="Bono H."/>
            <person name="Chalk A.M."/>
            <person name="Chiu K.P."/>
            <person name="Choudhary V."/>
            <person name="Christoffels A."/>
            <person name="Clutterbuck D.R."/>
            <person name="Crowe M.L."/>
            <person name="Dalla E."/>
            <person name="Dalrymple B.P."/>
            <person name="de Bono B."/>
            <person name="Della Gatta G."/>
            <person name="di Bernardo D."/>
            <person name="Down T."/>
            <person name="Engstrom P."/>
            <person name="Fagiolini M."/>
            <person name="Faulkner G."/>
            <person name="Fletcher C.F."/>
            <person name="Fukushima T."/>
            <person name="Furuno M."/>
            <person name="Futaki S."/>
            <person name="Gariboldi M."/>
            <person name="Georgii-Hemming P."/>
            <person name="Gingeras T.R."/>
            <person name="Gojobori T."/>
            <person name="Green R.E."/>
            <person name="Gustincich S."/>
            <person name="Harbers M."/>
            <person name="Hayashi Y."/>
            <person name="Hensch T.K."/>
            <person name="Hirokawa N."/>
            <person name="Hill D."/>
            <person name="Huminiecki L."/>
            <person name="Iacono M."/>
            <person name="Ikeo K."/>
            <person name="Iwama A."/>
            <person name="Ishikawa T."/>
            <person name="Jakt M."/>
            <person name="Kanapin A."/>
            <person name="Katoh M."/>
            <person name="Kawasawa Y."/>
            <person name="Kelso J."/>
            <person name="Kitamura H."/>
            <person name="Kitano H."/>
            <person name="Kollias G."/>
            <person name="Krishnan S.P."/>
            <person name="Kruger A."/>
            <person name="Kummerfeld S.K."/>
            <person name="Kurochkin I.V."/>
            <person name="Lareau L.F."/>
            <person name="Lazarevic D."/>
            <person name="Lipovich L."/>
            <person name="Liu J."/>
            <person name="Liuni S."/>
            <person name="McWilliam S."/>
            <person name="Madan Babu M."/>
            <person name="Madera M."/>
            <person name="Marchionni L."/>
            <person name="Matsuda H."/>
            <person name="Matsuzawa S."/>
            <person name="Miki H."/>
            <person name="Mignone F."/>
            <person name="Miyake S."/>
            <person name="Morris K."/>
            <person name="Mottagui-Tabar S."/>
            <person name="Mulder N."/>
            <person name="Nakano N."/>
            <person name="Nakauchi H."/>
            <person name="Ng P."/>
            <person name="Nilsson R."/>
            <person name="Nishiguchi S."/>
            <person name="Nishikawa S."/>
            <person name="Nori F."/>
            <person name="Ohara O."/>
            <person name="Okazaki Y."/>
            <person name="Orlando V."/>
            <person name="Pang K.C."/>
            <person name="Pavan W.J."/>
            <person name="Pavesi G."/>
            <person name="Pesole G."/>
            <person name="Petrovsky N."/>
            <person name="Piazza S."/>
            <person name="Reed J."/>
            <person name="Reid J.F."/>
            <person name="Ring B.Z."/>
            <person name="Ringwald M."/>
            <person name="Rost B."/>
            <person name="Ruan Y."/>
            <person name="Salzberg S.L."/>
            <person name="Sandelin A."/>
            <person name="Schneider C."/>
            <person name="Schoenbach C."/>
            <person name="Sekiguchi K."/>
            <person name="Semple C.A."/>
            <person name="Seno S."/>
            <person name="Sessa L."/>
            <person name="Sheng Y."/>
            <person name="Shibata Y."/>
            <person name="Shimada H."/>
            <person name="Shimada K."/>
            <person name="Silva D."/>
            <person name="Sinclair B."/>
            <person name="Sperling S."/>
            <person name="Stupka E."/>
            <person name="Sugiura K."/>
            <person name="Sultana R."/>
            <person name="Takenaka Y."/>
            <person name="Taki K."/>
            <person name="Tammoja K."/>
            <person name="Tan S.L."/>
            <person name="Tang S."/>
            <person name="Taylor M.S."/>
            <person name="Tegner J."/>
            <person name="Teichmann S.A."/>
            <person name="Ueda H.R."/>
            <person name="van Nimwegen E."/>
            <person name="Verardo R."/>
            <person name="Wei C.L."/>
            <person name="Yagi K."/>
            <person name="Yamanishi H."/>
            <person name="Zabarovsky E."/>
            <person name="Zhu S."/>
            <person name="Zimmer A."/>
            <person name="Hide W."/>
            <person name="Bult C."/>
            <person name="Grimmond S.M."/>
            <person name="Teasdale R.D."/>
            <person name="Liu E.T."/>
            <person name="Brusic V."/>
            <person name="Quackenbush J."/>
            <person name="Wahlestedt C."/>
            <person name="Mattick J.S."/>
            <person name="Hume D.A."/>
            <person name="Kai C."/>
            <person name="Sasaki D."/>
            <person name="Tomaru Y."/>
            <person name="Fukuda S."/>
            <person name="Kanamori-Katayama M."/>
            <person name="Suzuki M."/>
            <person name="Aoki J."/>
            <person name="Arakawa T."/>
            <person name="Iida J."/>
            <person name="Imamura K."/>
            <person name="Itoh M."/>
            <person name="Kato T."/>
            <person name="Kawaji H."/>
            <person name="Kawagashira N."/>
            <person name="Kawashima T."/>
            <person name="Kojima M."/>
            <person name="Kondo S."/>
            <person name="Konno H."/>
            <person name="Nakano K."/>
            <person name="Ninomiya N."/>
            <person name="Nishio T."/>
            <person name="Okada M."/>
            <person name="Plessy C."/>
            <person name="Shibata K."/>
            <person name="Shiraki T."/>
            <person name="Suzuki S."/>
            <person name="Tagami M."/>
            <person name="Waki K."/>
            <person name="Watahiki A."/>
            <person name="Okamura-Oho Y."/>
            <person name="Suzuki H."/>
            <person name="Kawai J."/>
            <person name="Hayashizaki Y."/>
        </authorList>
    </citation>
    <scope>NUCLEOTIDE SEQUENCE [LARGE SCALE MRNA] (ISOFORM 2)</scope>
    <source>
        <strain>C57BL/6J</strain>
        <tissue>Embryonic heart</tissue>
    </source>
</reference>
<reference key="5">
    <citation type="journal article" date="2004" name="Genome Res.">
        <title>The status, quality, and expansion of the NIH full-length cDNA project: the Mammalian Gene Collection (MGC).</title>
        <authorList>
            <consortium name="The MGC Project Team"/>
        </authorList>
    </citation>
    <scope>NUCLEOTIDE SEQUENCE [LARGE SCALE MRNA] (ISOFORM 2)</scope>
    <source>
        <strain>C57BL/6J</strain>
        <tissue>Head</tissue>
    </source>
</reference>
<reference key="6">
    <citation type="submission" date="2009-01" db="UniProtKB">
        <authorList>
            <person name="Lubec G."/>
            <person name="Sunyer B."/>
            <person name="Chen W.-Q."/>
        </authorList>
    </citation>
    <scope>PROTEIN SEQUENCE OF 15-23</scope>
    <scope>IDENTIFICATION BY MASS SPECTROMETRY</scope>
    <source>
        <strain>OF1</strain>
        <tissue>Hippocampus</tissue>
    </source>
</reference>
<reference key="7">
    <citation type="journal article" date="2010" name="Cell">
        <title>A tissue-specific atlas of mouse protein phosphorylation and expression.</title>
        <authorList>
            <person name="Huttlin E.L."/>
            <person name="Jedrychowski M.P."/>
            <person name="Elias J.E."/>
            <person name="Goswami T."/>
            <person name="Rad R."/>
            <person name="Beausoleil S.A."/>
            <person name="Villen J."/>
            <person name="Haas W."/>
            <person name="Sowa M.E."/>
            <person name="Gygi S.P."/>
        </authorList>
    </citation>
    <scope>IDENTIFICATION BY MASS SPECTROMETRY [LARGE SCALE ANALYSIS]</scope>
    <source>
        <tissue>Brain</tissue>
        <tissue>Brown adipose tissue</tissue>
        <tissue>Heart</tissue>
        <tissue>Kidney</tissue>
        <tissue>Liver</tissue>
        <tissue>Testis</tissue>
    </source>
</reference>
<reference key="8">
    <citation type="journal article" date="2012" name="J. Virol.">
        <title>Identification of novel host cell binding partners of Oas1b, the protein conferring resistance to flavivirus-induced disease in mice.</title>
        <authorList>
            <person name="Courtney S.C."/>
            <person name="Di H."/>
            <person name="Stockman B.M."/>
            <person name="Liu H."/>
            <person name="Scherbik S.V."/>
            <person name="Brinton M.A."/>
        </authorList>
    </citation>
    <scope>INTERACTION WITH OAS1B</scope>
</reference>
<sequence>MNTEAEQQLLHHARNGNAEEVRKLLAAMARMEVVADIDCKGRSKSNLGWTPLHLACYFGHKQVVEDLLKAGAKVNMLNDMGDTPLHRAAFTGRKELVLLLLEYDADSTVVNGSGQTAKEATHDKEIRNMLEAVERTQQRKLEELLLGAAREGRTAEVSALLSRPNPPDVNCSDQLGNTPLHCAAYRAHKQCVLKLLRSGADPSLKNKNDQKPLDLAQGAEMKHILVGNKVVHKALKRYEGPLWKSSRFFGWKLFWVVLEHGVLSWYRKQPDAVHNSYRQGCKHLTQAVCTVKPTDSCLFSIRCFDDTVHCFRVPKNSVQQSREKWLEAIEEHSAYSTHYCSQDQVTDDEEEDVVSAMDLKESLARAQTCQQRLDREIYNFLKMIKECDVAKDMLPSFLQKADIVSEASRETCVALNDCLNLFTKQEGVRNFKLEQEQEKNKILSEALETLATEHHELERSLVEGSPPVSILSEEEFYDALSGSESEGSLTCLEAVTAHSFEENEVPGSSGKHRMSEGKDCGGGDALSNGIKKHRTSLPSPMFSRNDFSIWSILRKCIGMELSKITMPVIFNEPLSFLQRLTEYMEHTYLIHKASSLSDPVERMQCVAAFAVSAVASQWERTGKPFNPLLGETYELVRDDLGFRLISEQVSHHPPISAFHAEGLNNDFIFHGSIYPKLKFWGKSVEAEPKGTITLELLDHNEAYTWTNPTCCVHNIIVGKLWIEQYGNVEIINHKTGDKCVLNFKPCGLFGKELHKVEGYIQDKSKKKLCALYGKWTECLYSVDPATFDAYKKNDKKNTEEKKNSKQTSSSEESDEMPVPDSESVFIIPGSVLLWRIAPRPPNSAQMYNFTSFAMVLNEVDKEMESVIPKTDCRLRPDIRAMENGEIDLASEEKKRLEEKQRAARKNRSKSEEDWKTRWFHQGPNPYSGAQDWIYSGSYWDRNYFNLPDIY</sequence>
<organism>
    <name type="scientific">Mus musculus</name>
    <name type="common">Mouse</name>
    <dbReference type="NCBI Taxonomy" id="10090"/>
    <lineage>
        <taxon>Eukaryota</taxon>
        <taxon>Metazoa</taxon>
        <taxon>Chordata</taxon>
        <taxon>Craniata</taxon>
        <taxon>Vertebrata</taxon>
        <taxon>Euteleostomi</taxon>
        <taxon>Mammalia</taxon>
        <taxon>Eutheria</taxon>
        <taxon>Euarchontoglires</taxon>
        <taxon>Glires</taxon>
        <taxon>Rodentia</taxon>
        <taxon>Myomorpha</taxon>
        <taxon>Muroidea</taxon>
        <taxon>Muridae</taxon>
        <taxon>Murinae</taxon>
        <taxon>Mus</taxon>
        <taxon>Mus</taxon>
    </lineage>
</organism>
<proteinExistence type="evidence at protein level"/>
<feature type="chain" id="PRO_0000100368" description="Oxysterol-binding protein-related protein 1">
    <location>
        <begin position="1"/>
        <end position="950"/>
    </location>
</feature>
<feature type="repeat" description="ANK 1">
    <location>
        <begin position="47"/>
        <end position="76"/>
    </location>
</feature>
<feature type="repeat" description="ANK 2">
    <location>
        <begin position="80"/>
        <end position="109"/>
    </location>
</feature>
<feature type="repeat" description="ANK 3">
    <location>
        <begin position="175"/>
        <end position="204"/>
    </location>
</feature>
<feature type="domain" description="PH" evidence="5">
    <location>
        <begin position="235"/>
        <end position="334"/>
    </location>
</feature>
<feature type="region of interest" description="Interaction with RAB7A" evidence="1">
    <location>
        <begin position="1"/>
        <end position="237"/>
    </location>
</feature>
<feature type="region of interest" description="Disordered" evidence="6">
    <location>
        <begin position="502"/>
        <end position="530"/>
    </location>
</feature>
<feature type="region of interest" description="Disordered" evidence="6">
    <location>
        <begin position="795"/>
        <end position="821"/>
    </location>
</feature>
<feature type="coiled-coil region" evidence="4">
    <location>
        <begin position="430"/>
        <end position="463"/>
    </location>
</feature>
<feature type="coiled-coil region" evidence="4">
    <location>
        <begin position="879"/>
        <end position="913"/>
    </location>
</feature>
<feature type="short sequence motif" description="FFAT" evidence="3">
    <location>
        <begin position="469"/>
        <end position="483"/>
    </location>
</feature>
<feature type="modified residue" description="Phosphoserine" evidence="3">
    <location>
        <position position="499"/>
    </location>
</feature>
<feature type="splice variant" id="VSP_017723" description="In isoform 3." evidence="12">
    <location>
        <begin position="1"/>
        <end position="540"/>
    </location>
</feature>
<feature type="splice variant" id="VSP_017724" description="In isoform 2." evidence="9 10 11">
    <location>
        <begin position="1"/>
        <end position="513"/>
    </location>
</feature>
<feature type="sequence conflict" description="In Ref. 5; AAH76637." evidence="13" ref="5">
    <original>E</original>
    <variation>D</variation>
    <location>
        <position position="572"/>
    </location>
</feature>
<feature type="sequence conflict" description="In Ref. 3; BAA33012." evidence="13" ref="3">
    <original>P</original>
    <variation>L</variation>
    <location>
        <position position="599"/>
    </location>
</feature>
<feature type="sequence conflict" description="In Ref. 1; AAK71661." evidence="13" ref="1">
    <original>E</original>
    <variation>K</variation>
    <location>
        <position position="685"/>
    </location>
</feature>
<feature type="sequence conflict" description="In Ref. 1; AAK71661." evidence="13" ref="1">
    <original>LD</original>
    <variation>FV</variation>
    <location>
        <begin position="697"/>
        <end position="698"/>
    </location>
</feature>
<feature type="sequence conflict" description="In Ref. 1; AAK71661." evidence="13" ref="1">
    <original>H</original>
    <variation>Q</variation>
    <location>
        <position position="713"/>
    </location>
</feature>
<feature type="sequence conflict" description="In Ref. 1; AAK71661." evidence="13" ref="1">
    <original>N</original>
    <variation>T</variation>
    <location>
        <position position="732"/>
    </location>
</feature>
<feature type="sequence conflict" description="In Ref. 1; AAK71661." evidence="13" ref="1">
    <original>K</original>
    <variation>N</variation>
    <location>
        <position position="744"/>
    </location>
</feature>
<feature type="sequence conflict" description="In Ref. 1; AAK71661." evidence="13" ref="1">
    <original>Y</original>
    <variation>S</variation>
    <location>
        <position position="759"/>
    </location>
</feature>
<feature type="helix" evidence="15">
    <location>
        <begin position="4"/>
        <end position="15"/>
    </location>
</feature>
<feature type="helix" evidence="15">
    <location>
        <begin position="18"/>
        <end position="29"/>
    </location>
</feature>
<feature type="strand" evidence="15">
    <location>
        <begin position="43"/>
        <end position="45"/>
    </location>
</feature>
<feature type="helix" evidence="15">
    <location>
        <begin position="51"/>
        <end position="58"/>
    </location>
</feature>
<feature type="helix" evidence="15">
    <location>
        <begin position="61"/>
        <end position="69"/>
    </location>
</feature>
<feature type="helix" evidence="15">
    <location>
        <begin position="84"/>
        <end position="90"/>
    </location>
</feature>
<feature type="helix" evidence="15">
    <location>
        <begin position="94"/>
        <end position="102"/>
    </location>
</feature>
<feature type="helix" evidence="15">
    <location>
        <begin position="117"/>
        <end position="120"/>
    </location>
</feature>
<feature type="helix" evidence="15">
    <location>
        <begin position="124"/>
        <end position="135"/>
    </location>
</feature>
<accession>Q91XL9</accession>
<accession>O88318</accession>
<accession>Q3TH97</accession>
<accession>Q673L8</accession>
<accession>Q6DFU6</accession>
<dbReference type="EMBL" id="AF394063">
    <property type="protein sequence ID" value="AAK71661.2"/>
    <property type="molecule type" value="mRNA"/>
</dbReference>
<dbReference type="EMBL" id="AY536214">
    <property type="protein sequence ID" value="AAT06024.1"/>
    <property type="molecule type" value="mRNA"/>
</dbReference>
<dbReference type="EMBL" id="AB017026">
    <property type="protein sequence ID" value="BAA33012.1"/>
    <property type="molecule type" value="mRNA"/>
</dbReference>
<dbReference type="EMBL" id="AK168366">
    <property type="protein sequence ID" value="BAE40301.1"/>
    <property type="molecule type" value="mRNA"/>
</dbReference>
<dbReference type="EMBL" id="BC076637">
    <property type="protein sequence ID" value="AAH76637.1"/>
    <property type="molecule type" value="mRNA"/>
</dbReference>
<dbReference type="CCDS" id="CCDS29067.1">
    <molecule id="Q91XL9-1"/>
</dbReference>
<dbReference type="CCDS" id="CCDS57114.1">
    <molecule id="Q91XL9-2"/>
</dbReference>
<dbReference type="RefSeq" id="NP_001239418.1">
    <property type="nucleotide sequence ID" value="NM_001252489.1"/>
</dbReference>
<dbReference type="RefSeq" id="NP_001239419.1">
    <molecule id="Q91XL9-2"/>
    <property type="nucleotide sequence ID" value="NM_001252490.1"/>
</dbReference>
<dbReference type="RefSeq" id="NP_001239420.1">
    <molecule id="Q91XL9-2"/>
    <property type="nucleotide sequence ID" value="NM_001252491.2"/>
</dbReference>
<dbReference type="RefSeq" id="NP_001239421.1">
    <molecule id="Q91XL9-2"/>
    <property type="nucleotide sequence ID" value="NM_001252492.1"/>
</dbReference>
<dbReference type="RefSeq" id="NP_001239422.1">
    <molecule id="Q91XL9-2"/>
    <property type="nucleotide sequence ID" value="NM_001252493.1"/>
</dbReference>
<dbReference type="RefSeq" id="NP_997413.2">
    <molecule id="Q91XL9-1"/>
    <property type="nucleotide sequence ID" value="NM_207530.3"/>
</dbReference>
<dbReference type="RefSeq" id="XP_006526204.1">
    <molecule id="Q91XL9-1"/>
    <property type="nucleotide sequence ID" value="XM_006526141.5"/>
</dbReference>
<dbReference type="RefSeq" id="XP_006526205.1">
    <molecule id="Q91XL9-1"/>
    <property type="nucleotide sequence ID" value="XM_006526142.4"/>
</dbReference>
<dbReference type="RefSeq" id="XP_006526210.1">
    <molecule id="Q91XL9-2"/>
    <property type="nucleotide sequence ID" value="XM_006526147.3"/>
</dbReference>
<dbReference type="RefSeq" id="XP_006526211.1">
    <molecule id="Q91XL9-2"/>
    <property type="nucleotide sequence ID" value="XM_006526148.3"/>
</dbReference>
<dbReference type="RefSeq" id="XP_017173451.1">
    <molecule id="Q91XL9-2"/>
    <property type="nucleotide sequence ID" value="XM_017317962.2"/>
</dbReference>
<dbReference type="RefSeq" id="XP_017173452.1">
    <molecule id="Q91XL9-2"/>
    <property type="nucleotide sequence ID" value="XM_017317963.2"/>
</dbReference>
<dbReference type="RefSeq" id="XP_017173453.1">
    <molecule id="Q91XL9-2"/>
    <property type="nucleotide sequence ID" value="XM_017317964.1"/>
</dbReference>
<dbReference type="RefSeq" id="XP_017173454.1">
    <molecule id="Q91XL9-2"/>
    <property type="nucleotide sequence ID" value="XM_017317965.1"/>
</dbReference>
<dbReference type="RefSeq" id="XP_030106425.1">
    <molecule id="Q91XL9-2"/>
    <property type="nucleotide sequence ID" value="XM_030250565.2"/>
</dbReference>
<dbReference type="RefSeq" id="XP_030106426.1">
    <molecule id="Q91XL9-2"/>
    <property type="nucleotide sequence ID" value="XM_030250566.2"/>
</dbReference>
<dbReference type="RefSeq" id="XP_030106427.1">
    <molecule id="Q91XL9-2"/>
    <property type="nucleotide sequence ID" value="XM_030250567.1"/>
</dbReference>
<dbReference type="RefSeq" id="XP_030106428.1">
    <molecule id="Q91XL9-3"/>
    <property type="nucleotide sequence ID" value="XM_030250568.1"/>
</dbReference>
<dbReference type="RefSeq" id="XP_036017128.1">
    <molecule id="Q91XL9-3"/>
    <property type="nucleotide sequence ID" value="XM_036161235.1"/>
</dbReference>
<dbReference type="RefSeq" id="XP_036017129.1">
    <molecule id="Q91XL9-3"/>
    <property type="nucleotide sequence ID" value="XM_036161236.1"/>
</dbReference>
<dbReference type="RefSeq" id="XP_036017130.1">
    <molecule id="Q91XL9-3"/>
    <property type="nucleotide sequence ID" value="XM_036161237.1"/>
</dbReference>
<dbReference type="RefSeq" id="XP_036017131.1">
    <molecule id="Q91XL9-3"/>
    <property type="nucleotide sequence ID" value="XM_036161238.1"/>
</dbReference>
<dbReference type="PDB" id="5Z2M">
    <property type="method" value="X-ray"/>
    <property type="resolution" value="2.14 A"/>
    <property type="chains" value="B/D=1-136"/>
</dbReference>
<dbReference type="PDB" id="5Z2N">
    <property type="method" value="X-ray"/>
    <property type="resolution" value="2.14 A"/>
    <property type="chains" value="A/B=1-136"/>
</dbReference>
<dbReference type="PDBsum" id="5Z2M"/>
<dbReference type="PDBsum" id="5Z2N"/>
<dbReference type="SMR" id="Q91XL9"/>
<dbReference type="BioGRID" id="211053">
    <property type="interactions" value="2"/>
</dbReference>
<dbReference type="FunCoup" id="Q91XL9">
    <property type="interactions" value="1354"/>
</dbReference>
<dbReference type="STRING" id="10090.ENSMUSP00000073957"/>
<dbReference type="GlyGen" id="Q91XL9">
    <property type="glycosylation" value="1 site, 1 O-linked glycan (1 site)"/>
</dbReference>
<dbReference type="iPTMnet" id="Q91XL9"/>
<dbReference type="PhosphoSitePlus" id="Q91XL9"/>
<dbReference type="SwissPalm" id="Q91XL9"/>
<dbReference type="jPOST" id="Q91XL9"/>
<dbReference type="PaxDb" id="10090-ENSMUSP00000073957"/>
<dbReference type="PeptideAtlas" id="Q91XL9"/>
<dbReference type="ProteomicsDB" id="294223">
    <molecule id="Q91XL9-1"/>
</dbReference>
<dbReference type="ProteomicsDB" id="294224">
    <molecule id="Q91XL9-2"/>
</dbReference>
<dbReference type="ProteomicsDB" id="294225">
    <molecule id="Q91XL9-3"/>
</dbReference>
<dbReference type="Pumba" id="Q91XL9"/>
<dbReference type="Antibodypedia" id="22086">
    <property type="antibodies" value="191 antibodies from 29 providers"/>
</dbReference>
<dbReference type="DNASU" id="64291"/>
<dbReference type="Ensembl" id="ENSMUST00000074352.11">
    <molecule id="Q91XL9-1"/>
    <property type="protein sequence ID" value="ENSMUSP00000073957.5"/>
    <property type="gene ID" value="ENSMUSG00000044252.19"/>
</dbReference>
<dbReference type="Ensembl" id="ENSMUST00000117361.8">
    <molecule id="Q91XL9-2"/>
    <property type="protein sequence ID" value="ENSMUSP00000112681.2"/>
    <property type="gene ID" value="ENSMUSG00000044252.19"/>
</dbReference>
<dbReference type="Ensembl" id="ENSMUST00000118313.8">
    <molecule id="Q91XL9-2"/>
    <property type="protein sequence ID" value="ENSMUSP00000113735.2"/>
    <property type="gene ID" value="ENSMUSG00000044252.19"/>
</dbReference>
<dbReference type="Ensembl" id="ENSMUST00000119043.8">
    <molecule id="Q91XL9-2"/>
    <property type="protein sequence ID" value="ENSMUSP00000113357.2"/>
    <property type="gene ID" value="ENSMUSG00000044252.19"/>
</dbReference>
<dbReference type="Ensembl" id="ENSMUST00000121774.8">
    <molecule id="Q91XL9-3"/>
    <property type="protein sequence ID" value="ENSMUSP00000113268.2"/>
    <property type="gene ID" value="ENSMUSG00000044252.19"/>
</dbReference>
<dbReference type="Ensembl" id="ENSMUST00000121808.8">
    <molecule id="Q91XL9-2"/>
    <property type="protein sequence ID" value="ENSMUSP00000113841.2"/>
    <property type="gene ID" value="ENSMUSG00000044252.19"/>
</dbReference>
<dbReference type="Ensembl" id="ENSMUST00000121888.8">
    <molecule id="Q91XL9-2"/>
    <property type="protein sequence ID" value="ENSMUSP00000112895.2"/>
    <property type="gene ID" value="ENSMUSG00000044252.19"/>
</dbReference>
<dbReference type="Ensembl" id="ENSMUST00000234194.2">
    <molecule id="Q91XL9-2"/>
    <property type="protein sequence ID" value="ENSMUSP00000157017.2"/>
    <property type="gene ID" value="ENSMUSG00000044252.19"/>
</dbReference>
<dbReference type="Ensembl" id="ENSMUST00000234871.2">
    <molecule id="Q91XL9-2"/>
    <property type="protein sequence ID" value="ENSMUSP00000157342.2"/>
    <property type="gene ID" value="ENSMUSG00000044252.19"/>
</dbReference>
<dbReference type="GeneID" id="64291"/>
<dbReference type="KEGG" id="mmu:64291"/>
<dbReference type="UCSC" id="uc008ecp.2">
    <molecule id="Q91XL9-2"/>
    <property type="organism name" value="mouse"/>
</dbReference>
<dbReference type="UCSC" id="uc008ecu.2">
    <molecule id="Q91XL9-1"/>
    <property type="organism name" value="mouse"/>
</dbReference>
<dbReference type="UCSC" id="uc012azm.2">
    <molecule id="Q91XL9-3"/>
    <property type="organism name" value="mouse"/>
</dbReference>
<dbReference type="AGR" id="MGI:1927551"/>
<dbReference type="CTD" id="114876"/>
<dbReference type="MGI" id="MGI:1927551">
    <property type="gene designation" value="Osbpl1a"/>
</dbReference>
<dbReference type="VEuPathDB" id="HostDB:ENSMUSG00000044252"/>
<dbReference type="eggNOG" id="KOG2209">
    <property type="taxonomic scope" value="Eukaryota"/>
</dbReference>
<dbReference type="GeneTree" id="ENSGT00940000155295"/>
<dbReference type="HOGENOM" id="CLU_007105_5_1_1"/>
<dbReference type="InParanoid" id="Q91XL9"/>
<dbReference type="OMA" id="HAESPHF"/>
<dbReference type="OrthoDB" id="416222at2759"/>
<dbReference type="PhylomeDB" id="Q91XL9"/>
<dbReference type="TreeFam" id="TF320922"/>
<dbReference type="Reactome" id="R-MMU-192105">
    <property type="pathway name" value="Synthesis of bile acids and bile salts"/>
</dbReference>
<dbReference type="Reactome" id="R-MMU-2132295">
    <property type="pathway name" value="MHC class II antigen presentation"/>
</dbReference>
<dbReference type="BioGRID-ORCS" id="64291">
    <property type="hits" value="2 hits in 79 CRISPR screens"/>
</dbReference>
<dbReference type="ChiTaRS" id="Osbpl1a">
    <property type="organism name" value="mouse"/>
</dbReference>
<dbReference type="PRO" id="PR:Q91XL9"/>
<dbReference type="Proteomes" id="UP000000589">
    <property type="component" value="Chromosome 18"/>
</dbReference>
<dbReference type="RNAct" id="Q91XL9">
    <property type="molecule type" value="protein"/>
</dbReference>
<dbReference type="Bgee" id="ENSMUSG00000044252">
    <property type="expression patterns" value="Expressed in retrosplenial region and 254 other cell types or tissues"/>
</dbReference>
<dbReference type="ExpressionAtlas" id="Q91XL9">
    <property type="expression patterns" value="baseline and differential"/>
</dbReference>
<dbReference type="GO" id="GO:0005770">
    <property type="term" value="C:late endosome"/>
    <property type="evidence" value="ECO:0000250"/>
    <property type="project" value="UniProtKB"/>
</dbReference>
<dbReference type="GO" id="GO:0044232">
    <property type="term" value="C:organelle membrane contact site"/>
    <property type="evidence" value="ECO:0007669"/>
    <property type="project" value="Ensembl"/>
</dbReference>
<dbReference type="GO" id="GO:0008289">
    <property type="term" value="F:lipid binding"/>
    <property type="evidence" value="ECO:0007669"/>
    <property type="project" value="UniProtKB-KW"/>
</dbReference>
<dbReference type="GO" id="GO:0006869">
    <property type="term" value="P:lipid transport"/>
    <property type="evidence" value="ECO:0007669"/>
    <property type="project" value="UniProtKB-KW"/>
</dbReference>
<dbReference type="CDD" id="cd13285">
    <property type="entry name" value="PH_ORP1"/>
    <property type="match status" value="1"/>
</dbReference>
<dbReference type="FunFam" id="1.25.40.20:FF:000094">
    <property type="entry name" value="Oxysterol-binding protein"/>
    <property type="match status" value="1"/>
</dbReference>
<dbReference type="FunFam" id="1.25.40.20:FF:000098">
    <property type="entry name" value="Oxysterol-binding protein"/>
    <property type="match status" value="1"/>
</dbReference>
<dbReference type="FunFam" id="2.30.29.30:FF:000231">
    <property type="entry name" value="Oxysterol-binding protein"/>
    <property type="match status" value="1"/>
</dbReference>
<dbReference type="FunFam" id="2.40.160.120:FF:000005">
    <property type="entry name" value="Oxysterol-binding protein"/>
    <property type="match status" value="1"/>
</dbReference>
<dbReference type="FunFam" id="3.30.70.3490:FF:000003">
    <property type="entry name" value="Oxysterol-binding protein"/>
    <property type="match status" value="1"/>
</dbReference>
<dbReference type="Gene3D" id="2.40.160.120">
    <property type="match status" value="1"/>
</dbReference>
<dbReference type="Gene3D" id="3.30.70.3490">
    <property type="match status" value="1"/>
</dbReference>
<dbReference type="Gene3D" id="1.25.40.20">
    <property type="entry name" value="Ankyrin repeat-containing domain"/>
    <property type="match status" value="2"/>
</dbReference>
<dbReference type="Gene3D" id="2.30.29.30">
    <property type="entry name" value="Pleckstrin-homology domain (PH domain)/Phosphotyrosine-binding domain (PTB)"/>
    <property type="match status" value="1"/>
</dbReference>
<dbReference type="InterPro" id="IPR002110">
    <property type="entry name" value="Ankyrin_rpt"/>
</dbReference>
<dbReference type="InterPro" id="IPR036770">
    <property type="entry name" value="Ankyrin_rpt-contain_sf"/>
</dbReference>
<dbReference type="InterPro" id="IPR037239">
    <property type="entry name" value="OSBP_sf"/>
</dbReference>
<dbReference type="InterPro" id="IPR000648">
    <property type="entry name" value="Oxysterol-bd"/>
</dbReference>
<dbReference type="InterPro" id="IPR018494">
    <property type="entry name" value="Oxysterol-bd_CS"/>
</dbReference>
<dbReference type="InterPro" id="IPR011993">
    <property type="entry name" value="PH-like_dom_sf"/>
</dbReference>
<dbReference type="InterPro" id="IPR001849">
    <property type="entry name" value="PH_domain"/>
</dbReference>
<dbReference type="PANTHER" id="PTHR10972">
    <property type="entry name" value="OXYSTEROL-BINDING PROTEIN-RELATED"/>
    <property type="match status" value="1"/>
</dbReference>
<dbReference type="PANTHER" id="PTHR10972:SF53">
    <property type="entry name" value="OXYSTEROL-BINDING PROTEIN-RELATED PROTEIN 1"/>
    <property type="match status" value="1"/>
</dbReference>
<dbReference type="Pfam" id="PF12796">
    <property type="entry name" value="Ank_2"/>
    <property type="match status" value="2"/>
</dbReference>
<dbReference type="Pfam" id="PF01237">
    <property type="entry name" value="Oxysterol_BP"/>
    <property type="match status" value="1"/>
</dbReference>
<dbReference type="PRINTS" id="PR01415">
    <property type="entry name" value="ANKYRIN"/>
</dbReference>
<dbReference type="SMART" id="SM00248">
    <property type="entry name" value="ANK"/>
    <property type="match status" value="3"/>
</dbReference>
<dbReference type="SMART" id="SM00233">
    <property type="entry name" value="PH"/>
    <property type="match status" value="1"/>
</dbReference>
<dbReference type="SUPFAM" id="SSF48403">
    <property type="entry name" value="Ankyrin repeat"/>
    <property type="match status" value="1"/>
</dbReference>
<dbReference type="SUPFAM" id="SSF144000">
    <property type="entry name" value="Oxysterol-binding protein-like"/>
    <property type="match status" value="1"/>
</dbReference>
<dbReference type="SUPFAM" id="SSF50729">
    <property type="entry name" value="PH domain-like"/>
    <property type="match status" value="1"/>
</dbReference>
<dbReference type="PROSITE" id="PS50297">
    <property type="entry name" value="ANK_REP_REGION"/>
    <property type="match status" value="1"/>
</dbReference>
<dbReference type="PROSITE" id="PS50088">
    <property type="entry name" value="ANK_REPEAT"/>
    <property type="match status" value="3"/>
</dbReference>
<dbReference type="PROSITE" id="PS01013">
    <property type="entry name" value="OSBP"/>
    <property type="match status" value="1"/>
</dbReference>
<dbReference type="PROSITE" id="PS50003">
    <property type="entry name" value="PH_DOMAIN"/>
    <property type="match status" value="1"/>
</dbReference>
<protein>
    <recommendedName>
        <fullName evidence="13">Oxysterol-binding protein-related protein 1</fullName>
        <shortName>ORP-1</shortName>
        <shortName>OSBP-related protein 1</shortName>
    </recommendedName>
</protein>
<gene>
    <name evidence="14" type="primary">Osbpl1a</name>
    <name type="synonym">Orp1</name>
    <name type="synonym">Orp1a</name>
    <name type="synonym">Orp1l</name>
</gene>
<keyword id="KW-0002">3D-structure</keyword>
<keyword id="KW-0025">Alternative splicing</keyword>
<keyword id="KW-0040">ANK repeat</keyword>
<keyword id="KW-0175">Coiled coil</keyword>
<keyword id="KW-0903">Direct protein sequencing</keyword>
<keyword id="KW-0967">Endosome</keyword>
<keyword id="KW-0445">Lipid transport</keyword>
<keyword id="KW-0446">Lipid-binding</keyword>
<keyword id="KW-0597">Phosphoprotein</keyword>
<keyword id="KW-1185">Reference proteome</keyword>
<keyword id="KW-0677">Repeat</keyword>
<keyword id="KW-0813">Transport</keyword>
<name>OSBL1_MOUSE</name>
<evidence type="ECO:0000250" key="1"/>
<evidence type="ECO:0000250" key="2">
    <source>
        <dbReference type="UniProtKB" id="Q8K4M9"/>
    </source>
</evidence>
<evidence type="ECO:0000250" key="3">
    <source>
        <dbReference type="UniProtKB" id="Q9BXW6"/>
    </source>
</evidence>
<evidence type="ECO:0000255" key="4"/>
<evidence type="ECO:0000255" key="5">
    <source>
        <dbReference type="PROSITE-ProRule" id="PRU00145"/>
    </source>
</evidence>
<evidence type="ECO:0000256" key="6">
    <source>
        <dbReference type="SAM" id="MobiDB-lite"/>
    </source>
</evidence>
<evidence type="ECO:0000269" key="7">
    <source>
    </source>
</evidence>
<evidence type="ECO:0000269" key="8">
    <source>
    </source>
</evidence>
<evidence type="ECO:0000303" key="9">
    <source>
    </source>
</evidence>
<evidence type="ECO:0000303" key="10">
    <source>
    </source>
</evidence>
<evidence type="ECO:0000303" key="11">
    <source>
    </source>
</evidence>
<evidence type="ECO:0000303" key="12">
    <source ref="3"/>
</evidence>
<evidence type="ECO:0000305" key="13"/>
<evidence type="ECO:0000312" key="14">
    <source>
        <dbReference type="MGI" id="MGI:1927551"/>
    </source>
</evidence>
<evidence type="ECO:0007829" key="15">
    <source>
        <dbReference type="PDB" id="5Z2N"/>
    </source>
</evidence>
<comment type="function">
    <text evidence="3">Binds phospholipids; exhibits strong binding to phosphatidic acid and weak binding to phosphatidylinositol 3-phosphate. Stabilizes GTP-bound RAB7A on late endosomes/lysosomes and alters functional properties of late endocytic compartments via its interaction with RAB7A. Binds 25-hydroxycholesterol and cholesterol.</text>
</comment>
<comment type="subunit">
    <text evidence="2 3 8">Interacts (via FFAT motif) with VAPA and VAPB (By similarity). Interacts with the GTP-bound form of RAB7A (By similarity). Interacts with OAS1B (PubMed:22623793). Interacts (via FFAT motif) with MOSPD2 (via MSP domain) (By similarity).</text>
</comment>
<comment type="subcellular location">
    <subcellularLocation>
        <location evidence="3">Late endosome</location>
    </subcellularLocation>
    <text evidence="3">Colocalizes with RAB7A, RAB9A and LAMP1 in late endosomes.</text>
</comment>
<comment type="alternative products">
    <event type="alternative splicing"/>
    <isoform>
        <id>Q91XL9-1</id>
        <name>1</name>
        <name>Osbpl1b</name>
        <sequence type="displayed"/>
    </isoform>
    <isoform>
        <id>Q91XL9-2</id>
        <name>2</name>
        <name>Osbpl1a</name>
        <sequence type="described" ref="VSP_017724"/>
    </isoform>
    <isoform>
        <id>Q91XL9-3</id>
        <name>3</name>
        <sequence type="described" ref="VSP_017723"/>
    </isoform>
</comment>
<comment type="tissue specificity">
    <text evidence="7">Ubiquitous.</text>
</comment>
<comment type="domain">
    <text evidence="3">The FFAT motif is required for interaction with MOSPD2.</text>
</comment>
<comment type="domain">
    <text evidence="3">The FFAT motif is required for interaction with MOSPD2, VAPA and VAPB.</text>
</comment>
<comment type="similarity">
    <text evidence="13">Belongs to the OSBP family.</text>
</comment>